<keyword id="KW-0002">3D-structure</keyword>
<keyword id="KW-0010">Activator</keyword>
<keyword id="KW-0877">Alternative promoter usage</keyword>
<keyword id="KW-0090">Biological rhythms</keyword>
<keyword id="KW-0217">Developmental protein</keyword>
<keyword id="KW-0225">Disease variant</keyword>
<keyword id="KW-0238">DNA-binding</keyword>
<keyword id="KW-0479">Metal-binding</keyword>
<keyword id="KW-0539">Nucleus</keyword>
<keyword id="KW-1267">Proteomics identification</keyword>
<keyword id="KW-0675">Receptor</keyword>
<keyword id="KW-1185">Reference proteome</keyword>
<keyword id="KW-0804">Transcription</keyword>
<keyword id="KW-0805">Transcription regulation</keyword>
<keyword id="KW-0862">Zinc</keyword>
<keyword id="KW-0863">Zinc-finger</keyword>
<organism>
    <name type="scientific">Homo sapiens</name>
    <name type="common">Human</name>
    <dbReference type="NCBI Taxonomy" id="9606"/>
    <lineage>
        <taxon>Eukaryota</taxon>
        <taxon>Metazoa</taxon>
        <taxon>Chordata</taxon>
        <taxon>Craniata</taxon>
        <taxon>Vertebrata</taxon>
        <taxon>Euteleostomi</taxon>
        <taxon>Mammalia</taxon>
        <taxon>Eutheria</taxon>
        <taxon>Euarchontoglires</taxon>
        <taxon>Primates</taxon>
        <taxon>Haplorrhini</taxon>
        <taxon>Catarrhini</taxon>
        <taxon>Hominidae</taxon>
        <taxon>Homo</taxon>
    </lineage>
</organism>
<dbReference type="EMBL" id="U16997">
    <property type="protein sequence ID" value="AAA64751.1"/>
    <property type="status" value="ALT_FRAME"/>
    <property type="molecule type" value="mRNA"/>
</dbReference>
<dbReference type="EMBL" id="AL834219">
    <property type="protein sequence ID" value="CAD38900.1"/>
    <property type="molecule type" value="mRNA"/>
</dbReference>
<dbReference type="EMBL" id="AL589765">
    <property type="status" value="NOT_ANNOTATED_CDS"/>
    <property type="molecule type" value="Genomic_DNA"/>
</dbReference>
<dbReference type="EMBL" id="BC031554">
    <property type="protein sequence ID" value="AAH31554.1"/>
    <property type="molecule type" value="mRNA"/>
</dbReference>
<dbReference type="CCDS" id="CCDS1004.1">
    <molecule id="P51449-1"/>
</dbReference>
<dbReference type="CCDS" id="CCDS30856.1">
    <molecule id="P51449-2"/>
</dbReference>
<dbReference type="PIR" id="JC2494">
    <property type="entry name" value="JC2494"/>
</dbReference>
<dbReference type="RefSeq" id="NP_001001523.1">
    <molecule id="P51449-2"/>
    <property type="nucleotide sequence ID" value="NM_001001523.2"/>
</dbReference>
<dbReference type="RefSeq" id="NP_005051.2">
    <molecule id="P51449-1"/>
    <property type="nucleotide sequence ID" value="NM_005060.3"/>
</dbReference>
<dbReference type="PDB" id="3B0W">
    <property type="method" value="X-ray"/>
    <property type="resolution" value="2.20 A"/>
    <property type="chains" value="A/B=265-507"/>
</dbReference>
<dbReference type="PDB" id="3KYT">
    <property type="method" value="X-ray"/>
    <property type="resolution" value="2.35 A"/>
    <property type="chains" value="A=265-507"/>
</dbReference>
<dbReference type="PDB" id="3L0J">
    <property type="method" value="X-ray"/>
    <property type="resolution" value="2.40 A"/>
    <property type="chains" value="A=265-507"/>
</dbReference>
<dbReference type="PDB" id="3L0L">
    <property type="method" value="X-ray"/>
    <property type="resolution" value="1.74 A"/>
    <property type="chains" value="A/B=260-507"/>
</dbReference>
<dbReference type="PDB" id="4NB6">
    <property type="method" value="X-ray"/>
    <property type="resolution" value="2.85 A"/>
    <property type="chains" value="A/B=262-507"/>
</dbReference>
<dbReference type="PDB" id="4NIE">
    <property type="method" value="X-ray"/>
    <property type="resolution" value="2.01 A"/>
    <property type="chains" value="A/B=263-509"/>
</dbReference>
<dbReference type="PDB" id="4QM0">
    <property type="method" value="X-ray"/>
    <property type="resolution" value="2.20 A"/>
    <property type="chains" value="A/C=262-507"/>
</dbReference>
<dbReference type="PDB" id="4S14">
    <property type="method" value="X-ray"/>
    <property type="resolution" value="3.54 A"/>
    <property type="chains" value="A=262-518"/>
</dbReference>
<dbReference type="PDB" id="4WLB">
    <property type="method" value="X-ray"/>
    <property type="resolution" value="1.70 A"/>
    <property type="chains" value="A/B=262-507"/>
</dbReference>
<dbReference type="PDB" id="4WPF">
    <property type="method" value="X-ray"/>
    <property type="resolution" value="2.20 A"/>
    <property type="chains" value="A/D=262-509"/>
</dbReference>
<dbReference type="PDB" id="4WQP">
    <property type="method" value="X-ray"/>
    <property type="resolution" value="1.99 A"/>
    <property type="chains" value="A/B=262-507, P=480-492"/>
</dbReference>
<dbReference type="PDB" id="4XT9">
    <property type="method" value="X-ray"/>
    <property type="resolution" value="2.25 A"/>
    <property type="chains" value="A=265-507"/>
</dbReference>
<dbReference type="PDB" id="4YMQ">
    <property type="method" value="X-ray"/>
    <property type="resolution" value="2.00 A"/>
    <property type="chains" value="A=260-507"/>
</dbReference>
<dbReference type="PDB" id="4YPQ">
    <property type="method" value="X-ray"/>
    <property type="resolution" value="2.32 A"/>
    <property type="chains" value="A=265-507"/>
</dbReference>
<dbReference type="PDB" id="4ZJR">
    <property type="method" value="X-ray"/>
    <property type="resolution" value="2.70 A"/>
    <property type="chains" value="A/B/C/D=265-487"/>
</dbReference>
<dbReference type="PDB" id="4ZJW">
    <property type="method" value="X-ray"/>
    <property type="resolution" value="2.50 A"/>
    <property type="chains" value="A/B=265-487"/>
</dbReference>
<dbReference type="PDB" id="4ZOM">
    <property type="method" value="X-ray"/>
    <property type="resolution" value="2.27 A"/>
    <property type="chains" value="A/B/C/D=265-487"/>
</dbReference>
<dbReference type="PDB" id="5APH">
    <property type="method" value="X-ray"/>
    <property type="resolution" value="1.54 A"/>
    <property type="chains" value="A=265-507"/>
</dbReference>
<dbReference type="PDB" id="5APJ">
    <property type="method" value="X-ray"/>
    <property type="resolution" value="2.08 A"/>
    <property type="chains" value="A=265-507"/>
</dbReference>
<dbReference type="PDB" id="5APK">
    <property type="method" value="X-ray"/>
    <property type="resolution" value="2.10 A"/>
    <property type="chains" value="A/B=265-507, D=480-492"/>
</dbReference>
<dbReference type="PDB" id="5AYG">
    <property type="method" value="X-ray"/>
    <property type="resolution" value="2.60 A"/>
    <property type="chains" value="A/B=261-518"/>
</dbReference>
<dbReference type="PDB" id="5C4O">
    <property type="method" value="X-ray"/>
    <property type="resolution" value="2.24 A"/>
    <property type="chains" value="A=267-507"/>
</dbReference>
<dbReference type="PDB" id="5C4S">
    <property type="method" value="X-ray"/>
    <property type="resolution" value="2.23 A"/>
    <property type="chains" value="A=267-507"/>
</dbReference>
<dbReference type="PDB" id="5C4T">
    <property type="method" value="X-ray"/>
    <property type="resolution" value="1.77 A"/>
    <property type="chains" value="A=267-507"/>
</dbReference>
<dbReference type="PDB" id="5C4U">
    <property type="method" value="X-ray"/>
    <property type="resolution" value="2.08 A"/>
    <property type="chains" value="A=267-507"/>
</dbReference>
<dbReference type="PDB" id="5EJV">
    <property type="method" value="X-ray"/>
    <property type="resolution" value="2.58 A"/>
    <property type="chains" value="A/B=259-518"/>
</dbReference>
<dbReference type="PDB" id="5ETH">
    <property type="method" value="X-ray"/>
    <property type="resolution" value="2.80 A"/>
    <property type="chains" value="A/B=267-487"/>
</dbReference>
<dbReference type="PDB" id="5G42">
    <property type="method" value="X-ray"/>
    <property type="resolution" value="1.72 A"/>
    <property type="chains" value="A=265-507"/>
</dbReference>
<dbReference type="PDB" id="5G43">
    <property type="method" value="X-ray"/>
    <property type="resolution" value="2.58 A"/>
    <property type="chains" value="A=265-507"/>
</dbReference>
<dbReference type="PDB" id="5G44">
    <property type="method" value="X-ray"/>
    <property type="resolution" value="1.84 A"/>
    <property type="chains" value="A=265-507"/>
</dbReference>
<dbReference type="PDB" id="5G45">
    <property type="method" value="X-ray"/>
    <property type="resolution" value="2.07 A"/>
    <property type="chains" value="A=265-507"/>
</dbReference>
<dbReference type="PDB" id="5G46">
    <property type="method" value="X-ray"/>
    <property type="resolution" value="1.76 A"/>
    <property type="chains" value="A=265-507"/>
</dbReference>
<dbReference type="PDB" id="5IXK">
    <property type="method" value="X-ray"/>
    <property type="resolution" value="2.35 A"/>
    <property type="chains" value="A/B=268-487"/>
</dbReference>
<dbReference type="PDB" id="5IZ0">
    <property type="method" value="X-ray"/>
    <property type="resolution" value="2.63 A"/>
    <property type="chains" value="A/B/D/G=259-518"/>
</dbReference>
<dbReference type="PDB" id="5K38">
    <property type="method" value="X-ray"/>
    <property type="resolution" value="2.05 A"/>
    <property type="chains" value="A/B=265-507"/>
</dbReference>
<dbReference type="PDB" id="5K3L">
    <property type="method" value="X-ray"/>
    <property type="resolution" value="2.75 A"/>
    <property type="chains" value="A/B/C/D=265-507"/>
</dbReference>
<dbReference type="PDB" id="5K3M">
    <property type="method" value="X-ray"/>
    <property type="resolution" value="2.89 A"/>
    <property type="chains" value="A/B=265-507"/>
</dbReference>
<dbReference type="PDB" id="5K3N">
    <property type="method" value="X-ray"/>
    <property type="resolution" value="2.67 A"/>
    <property type="chains" value="A/B/C/D=265-507"/>
</dbReference>
<dbReference type="PDB" id="5K6E">
    <property type="method" value="X-ray"/>
    <property type="resolution" value="2.80 A"/>
    <property type="chains" value="A/B=265-507"/>
</dbReference>
<dbReference type="PDB" id="5K74">
    <property type="method" value="X-ray"/>
    <property type="resolution" value="2.75 A"/>
    <property type="chains" value="A/B=265-507"/>
</dbReference>
<dbReference type="PDB" id="5LWP">
    <property type="method" value="X-ray"/>
    <property type="resolution" value="2.40 A"/>
    <property type="chains" value="A=265-506"/>
</dbReference>
<dbReference type="PDB" id="5M96">
    <property type="method" value="X-ray"/>
    <property type="resolution" value="1.77 A"/>
    <property type="chains" value="A/B=263-491"/>
</dbReference>
<dbReference type="PDB" id="5NI5">
    <property type="method" value="X-ray"/>
    <property type="resolution" value="2.30 A"/>
    <property type="chains" value="A=265-507"/>
</dbReference>
<dbReference type="PDB" id="5NI7">
    <property type="method" value="X-ray"/>
    <property type="resolution" value="2.45 A"/>
    <property type="chains" value="A=265-507"/>
</dbReference>
<dbReference type="PDB" id="5NI8">
    <property type="method" value="X-ray"/>
    <property type="resolution" value="1.94 A"/>
    <property type="chains" value="A=265-507"/>
</dbReference>
<dbReference type="PDB" id="5NIB">
    <property type="method" value="X-ray"/>
    <property type="resolution" value="1.82 A"/>
    <property type="chains" value="A=265-507"/>
</dbReference>
<dbReference type="PDB" id="5NTI">
    <property type="method" value="X-ray"/>
    <property type="resolution" value="2.40 A"/>
    <property type="chains" value="A/B/C/D=263-518"/>
</dbReference>
<dbReference type="PDB" id="5NTK">
    <property type="method" value="X-ray"/>
    <property type="resolution" value="1.90 A"/>
    <property type="chains" value="A/B=263-491"/>
</dbReference>
<dbReference type="PDB" id="5NTN">
    <property type="method" value="X-ray"/>
    <property type="resolution" value="1.90 A"/>
    <property type="chains" value="A/B/C/D=263-518"/>
</dbReference>
<dbReference type="PDB" id="5NTP">
    <property type="method" value="X-ray"/>
    <property type="resolution" value="1.70 A"/>
    <property type="chains" value="A=263-499"/>
</dbReference>
<dbReference type="PDB" id="5NTQ">
    <property type="method" value="X-ray"/>
    <property type="resolution" value="2.26 A"/>
    <property type="chains" value="A/B=263-499"/>
</dbReference>
<dbReference type="PDB" id="5NTW">
    <property type="method" value="X-ray"/>
    <property type="resolution" value="1.64 A"/>
    <property type="chains" value="A/B/C/D=263-518"/>
</dbReference>
<dbReference type="PDB" id="5NU1">
    <property type="method" value="X-ray"/>
    <property type="resolution" value="1.85 A"/>
    <property type="chains" value="A/B=263-518"/>
</dbReference>
<dbReference type="PDB" id="5UFO">
    <property type="method" value="X-ray"/>
    <property type="resolution" value="2.80 A"/>
    <property type="chains" value="A=265-507"/>
</dbReference>
<dbReference type="PDB" id="5UFR">
    <property type="method" value="X-ray"/>
    <property type="resolution" value="2.07 A"/>
    <property type="chains" value="A/B=265-507"/>
</dbReference>
<dbReference type="PDB" id="5UHI">
    <property type="method" value="X-ray"/>
    <property type="resolution" value="3.20 A"/>
    <property type="chains" value="A/B=265-507"/>
</dbReference>
<dbReference type="PDB" id="5VB3">
    <property type="method" value="X-ray"/>
    <property type="resolution" value="1.95 A"/>
    <property type="chains" value="A=260-507"/>
</dbReference>
<dbReference type="PDB" id="5VB5">
    <property type="method" value="X-ray"/>
    <property type="resolution" value="2.23 A"/>
    <property type="chains" value="A=260-507"/>
</dbReference>
<dbReference type="PDB" id="5VB6">
    <property type="method" value="X-ray"/>
    <property type="resolution" value="2.04 A"/>
    <property type="chains" value="A=260-507"/>
</dbReference>
<dbReference type="PDB" id="5VB7">
    <property type="method" value="X-ray"/>
    <property type="resolution" value="2.33 A"/>
    <property type="chains" value="A=260-507"/>
</dbReference>
<dbReference type="PDB" id="5VQK">
    <property type="method" value="X-ray"/>
    <property type="resolution" value="3.10 A"/>
    <property type="chains" value="A=260-507"/>
</dbReference>
<dbReference type="PDB" id="5VQL">
    <property type="method" value="X-ray"/>
    <property type="resolution" value="2.70 A"/>
    <property type="chains" value="A=260-507"/>
</dbReference>
<dbReference type="PDB" id="5W4R">
    <property type="method" value="X-ray"/>
    <property type="resolution" value="3.00 A"/>
    <property type="chains" value="A/B=265-481"/>
</dbReference>
<dbReference type="PDB" id="5W4V">
    <property type="method" value="X-ray"/>
    <property type="resolution" value="2.65 A"/>
    <property type="chains" value="A/B/C/D/E/F=266-475"/>
</dbReference>
<dbReference type="PDB" id="5X8Q">
    <property type="method" value="X-ray"/>
    <property type="resolution" value="2.20 A"/>
    <property type="chains" value="A/C/E/G=261-518"/>
</dbReference>
<dbReference type="PDB" id="5YP5">
    <property type="method" value="X-ray"/>
    <property type="resolution" value="2.65 A"/>
    <property type="chains" value="A=265-507"/>
</dbReference>
<dbReference type="PDB" id="5YP6">
    <property type="method" value="X-ray"/>
    <property type="resolution" value="2.20 A"/>
    <property type="chains" value="A=265-507"/>
</dbReference>
<dbReference type="PDB" id="5ZA1">
    <property type="method" value="X-ray"/>
    <property type="resolution" value="2.52 A"/>
    <property type="chains" value="A/B=265-494"/>
</dbReference>
<dbReference type="PDB" id="6A22">
    <property type="method" value="X-ray"/>
    <property type="resolution" value="2.55 A"/>
    <property type="chains" value="A/C/E/G=261-518"/>
</dbReference>
<dbReference type="PDB" id="6B30">
    <property type="method" value="X-ray"/>
    <property type="resolution" value="2.69 A"/>
    <property type="chains" value="A/B=265-479"/>
</dbReference>
<dbReference type="PDB" id="6B31">
    <property type="method" value="X-ray"/>
    <property type="resolution" value="3.18 A"/>
    <property type="chains" value="A/B=265-492"/>
</dbReference>
<dbReference type="PDB" id="6B33">
    <property type="method" value="X-ray"/>
    <property type="resolution" value="2.48 A"/>
    <property type="chains" value="A/B=265-482"/>
</dbReference>
<dbReference type="PDB" id="6BN6">
    <property type="method" value="X-ray"/>
    <property type="resolution" value="2.40 A"/>
    <property type="chains" value="A/B=265-508"/>
</dbReference>
<dbReference type="PDB" id="6BR2">
    <property type="method" value="X-ray"/>
    <property type="resolution" value="3.18 A"/>
    <property type="chains" value="A/B=265-479"/>
</dbReference>
<dbReference type="PDB" id="6BR3">
    <property type="method" value="X-ray"/>
    <property type="resolution" value="3.00 A"/>
    <property type="chains" value="A/B=265-480"/>
</dbReference>
<dbReference type="PDB" id="6CN5">
    <property type="method" value="X-ray"/>
    <property type="resolution" value="2.30 A"/>
    <property type="chains" value="A/B=259-518"/>
</dbReference>
<dbReference type="PDB" id="6CN6">
    <property type="method" value="X-ray"/>
    <property type="resolution" value="2.45 A"/>
    <property type="chains" value="A=259-517"/>
</dbReference>
<dbReference type="PDB" id="6CVH">
    <property type="method" value="X-ray"/>
    <property type="resolution" value="3.50 A"/>
    <property type="chains" value="A=265-489"/>
</dbReference>
<dbReference type="PDB" id="6E3E">
    <property type="method" value="X-ray"/>
    <property type="resolution" value="2.47 A"/>
    <property type="chains" value="A/B=265-481"/>
</dbReference>
<dbReference type="PDB" id="6E3G">
    <property type="method" value="X-ray"/>
    <property type="resolution" value="2.10 A"/>
    <property type="chains" value="A/B=263-507"/>
</dbReference>
<dbReference type="PDB" id="6ESN">
    <property type="method" value="X-ray"/>
    <property type="resolution" value="1.84 A"/>
    <property type="chains" value="A=265-507"/>
</dbReference>
<dbReference type="PDB" id="6FGQ">
    <property type="method" value="X-ray"/>
    <property type="resolution" value="2.37 A"/>
    <property type="chains" value="A/B=265-507"/>
</dbReference>
<dbReference type="PDB" id="6FZU">
    <property type="method" value="X-ray"/>
    <property type="resolution" value="1.80 A"/>
    <property type="chains" value="A/B=263-518"/>
</dbReference>
<dbReference type="PDB" id="6G05">
    <property type="method" value="X-ray"/>
    <property type="resolution" value="1.90 A"/>
    <property type="chains" value="A/B=263-518"/>
</dbReference>
<dbReference type="PDB" id="6G07">
    <property type="method" value="X-ray"/>
    <property type="resolution" value="1.66 A"/>
    <property type="chains" value="A/B/C/D=263-518"/>
</dbReference>
<dbReference type="PDB" id="6IVX">
    <property type="method" value="X-ray"/>
    <property type="resolution" value="2.35 A"/>
    <property type="chains" value="A/C/E/G=261-518"/>
</dbReference>
<dbReference type="PDB" id="6J1L">
    <property type="method" value="X-ray"/>
    <property type="resolution" value="2.30 A"/>
    <property type="chains" value="A/B/C=262-507"/>
</dbReference>
<dbReference type="PDB" id="6J3N">
    <property type="method" value="X-ray"/>
    <property type="resolution" value="1.99 A"/>
    <property type="chains" value="A=265-509"/>
</dbReference>
<dbReference type="PDB" id="6LO9">
    <property type="method" value="X-ray"/>
    <property type="resolution" value="1.86 A"/>
    <property type="chains" value="A=260-507"/>
</dbReference>
<dbReference type="PDB" id="6LOA">
    <property type="method" value="X-ray"/>
    <property type="resolution" value="2.50 A"/>
    <property type="chains" value="A=260-507"/>
</dbReference>
<dbReference type="PDB" id="6LOB">
    <property type="method" value="X-ray"/>
    <property type="resolution" value="2.40 A"/>
    <property type="chains" value="A=260-507"/>
</dbReference>
<dbReference type="PDB" id="6LOC">
    <property type="method" value="X-ray"/>
    <property type="resolution" value="2.20 A"/>
    <property type="chains" value="A=260-507"/>
</dbReference>
<dbReference type="PDB" id="6NAD">
    <property type="method" value="X-ray"/>
    <property type="resolution" value="2.90 A"/>
    <property type="chains" value="A/B=265-507"/>
</dbReference>
<dbReference type="PDB" id="6NWS">
    <property type="method" value="X-ray"/>
    <property type="resolution" value="2.44 A"/>
    <property type="chains" value="A=265-507"/>
</dbReference>
<dbReference type="PDB" id="6NWT">
    <property type="method" value="X-ray"/>
    <property type="resolution" value="2.35 A"/>
    <property type="chains" value="A/C=265-507"/>
</dbReference>
<dbReference type="PDB" id="6NWU">
    <property type="method" value="X-ray"/>
    <property type="resolution" value="3.20 A"/>
    <property type="chains" value="A=265-507"/>
</dbReference>
<dbReference type="PDB" id="6O3Z">
    <property type="method" value="X-ray"/>
    <property type="resolution" value="2.40 A"/>
    <property type="chains" value="A=259-508"/>
</dbReference>
<dbReference type="PDB" id="6O98">
    <property type="method" value="X-ray"/>
    <property type="resolution" value="2.29 A"/>
    <property type="chains" value="A/B=265-508"/>
</dbReference>
<dbReference type="PDB" id="6P9F">
    <property type="method" value="X-ray"/>
    <property type="resolution" value="2.80 A"/>
    <property type="chains" value="A/B=265-508"/>
</dbReference>
<dbReference type="PDB" id="6Q2W">
    <property type="method" value="X-ray"/>
    <property type="resolution" value="1.99 A"/>
    <property type="chains" value="A/B=267-487"/>
</dbReference>
<dbReference type="PDB" id="6Q6M">
    <property type="method" value="X-ray"/>
    <property type="resolution" value="2.35 A"/>
    <property type="chains" value="A=263-499"/>
</dbReference>
<dbReference type="PDB" id="6Q6O">
    <property type="method" value="X-ray"/>
    <property type="resolution" value="2.30 A"/>
    <property type="chains" value="A=263-499"/>
</dbReference>
<dbReference type="PDB" id="6Q7A">
    <property type="method" value="X-ray"/>
    <property type="resolution" value="2.20 A"/>
    <property type="chains" value="A=263-499"/>
</dbReference>
<dbReference type="PDB" id="6Q7H">
    <property type="method" value="X-ray"/>
    <property type="resolution" value="2.30 A"/>
    <property type="chains" value="A=263-499"/>
</dbReference>
<dbReference type="PDB" id="6R7A">
    <property type="method" value="X-ray"/>
    <property type="resolution" value="2.13 A"/>
    <property type="chains" value="A=265-507"/>
</dbReference>
<dbReference type="PDB" id="6R7J">
    <property type="method" value="X-ray"/>
    <property type="resolution" value="1.84 A"/>
    <property type="chains" value="A=265-507"/>
</dbReference>
<dbReference type="PDB" id="6R7K">
    <property type="method" value="X-ray"/>
    <property type="resolution" value="1.54 A"/>
    <property type="chains" value="A=265-507"/>
</dbReference>
<dbReference type="PDB" id="6SAL">
    <property type="method" value="X-ray"/>
    <property type="resolution" value="1.61 A"/>
    <property type="chains" value="A=265-507"/>
</dbReference>
<dbReference type="PDB" id="6SLZ">
    <property type="method" value="X-ray"/>
    <property type="resolution" value="2.20 A"/>
    <property type="chains" value="A/B=261-507"/>
</dbReference>
<dbReference type="PDB" id="6T4G">
    <property type="method" value="X-ray"/>
    <property type="resolution" value="1.93 A"/>
    <property type="chains" value="A=265-507"/>
</dbReference>
<dbReference type="PDB" id="6T4I">
    <property type="method" value="X-ray"/>
    <property type="resolution" value="1.84 A"/>
    <property type="chains" value="A=265-507"/>
</dbReference>
<dbReference type="PDB" id="6T4J">
    <property type="method" value="X-ray"/>
    <property type="resolution" value="1.79 A"/>
    <property type="chains" value="A=265-507"/>
</dbReference>
<dbReference type="PDB" id="6T4K">
    <property type="method" value="X-ray"/>
    <property type="resolution" value="1.89 A"/>
    <property type="chains" value="A=265-507"/>
</dbReference>
<dbReference type="PDB" id="6T4T">
    <property type="method" value="X-ray"/>
    <property type="resolution" value="1.62 A"/>
    <property type="chains" value="A=267-507"/>
</dbReference>
<dbReference type="PDB" id="6T4U">
    <property type="method" value="X-ray"/>
    <property type="resolution" value="2.00 A"/>
    <property type="chains" value="A=268-507"/>
</dbReference>
<dbReference type="PDB" id="6T4W">
    <property type="method" value="X-ray"/>
    <property type="resolution" value="1.71 A"/>
    <property type="chains" value="A=268-507"/>
</dbReference>
<dbReference type="PDB" id="6T4X">
    <property type="method" value="X-ray"/>
    <property type="resolution" value="1.48 A"/>
    <property type="chains" value="A=265-507"/>
</dbReference>
<dbReference type="PDB" id="6T4Y">
    <property type="method" value="X-ray"/>
    <property type="resolution" value="1.95 A"/>
    <property type="chains" value="A=265-507"/>
</dbReference>
<dbReference type="PDB" id="6T50">
    <property type="method" value="X-ray"/>
    <property type="resolution" value="1.87 A"/>
    <property type="chains" value="A=265-507"/>
</dbReference>
<dbReference type="PDB" id="6TLM">
    <property type="method" value="X-ray"/>
    <property type="resolution" value="2.32 A"/>
    <property type="chains" value="A=265-507"/>
</dbReference>
<dbReference type="PDB" id="6TLQ">
    <property type="method" value="X-ray"/>
    <property type="resolution" value="1.76 A"/>
    <property type="chains" value="A=265-507"/>
</dbReference>
<dbReference type="PDB" id="6TLT">
    <property type="method" value="X-ray"/>
    <property type="resolution" value="2.11 A"/>
    <property type="chains" value="A=265-507"/>
</dbReference>
<dbReference type="PDB" id="6U25">
    <property type="method" value="X-ray"/>
    <property type="resolution" value="2.61 A"/>
    <property type="chains" value="A=265-508"/>
</dbReference>
<dbReference type="PDB" id="6UCG">
    <property type="method" value="X-ray"/>
    <property type="resolution" value="2.87 A"/>
    <property type="chains" value="A=267-507"/>
</dbReference>
<dbReference type="PDB" id="6VQF">
    <property type="method" value="X-ray"/>
    <property type="resolution" value="2.00 A"/>
    <property type="chains" value="A=265-508"/>
</dbReference>
<dbReference type="PDB" id="6VSW">
    <property type="method" value="X-ray"/>
    <property type="resolution" value="3.20 A"/>
    <property type="chains" value="A/B=261-492"/>
</dbReference>
<dbReference type="PDB" id="6W9H">
    <property type="method" value="X-ray"/>
    <property type="resolution" value="2.00 A"/>
    <property type="chains" value="A=265-508"/>
</dbReference>
<dbReference type="PDB" id="6W9I">
    <property type="method" value="X-ray"/>
    <property type="resolution" value="1.61 A"/>
    <property type="chains" value="A=265-508"/>
</dbReference>
<dbReference type="PDB" id="6XAE">
    <property type="method" value="X-ray"/>
    <property type="resolution" value="2.26 A"/>
    <property type="chains" value="A=265-508"/>
</dbReference>
<dbReference type="PDB" id="6XFV">
    <property type="method" value="X-ray"/>
    <property type="resolution" value="2.15 A"/>
    <property type="chains" value="A/B=265-508"/>
</dbReference>
<dbReference type="PDB" id="7E3M">
    <property type="method" value="X-ray"/>
    <property type="resolution" value="2.80 A"/>
    <property type="chains" value="A=265-507"/>
</dbReference>
<dbReference type="PDB" id="7JH2">
    <property type="method" value="X-ray"/>
    <property type="resolution" value="2.37 A"/>
    <property type="chains" value="A/B=265-508"/>
</dbReference>
<dbReference type="PDB" id="7JTM">
    <property type="method" value="X-ray"/>
    <property type="resolution" value="2.43 A"/>
    <property type="chains" value="A=265-508"/>
</dbReference>
<dbReference type="PDB" id="7JTW">
    <property type="method" value="X-ray"/>
    <property type="resolution" value="1.90 A"/>
    <property type="chains" value="A=259-508"/>
</dbReference>
<dbReference type="PDB" id="7JYM">
    <property type="method" value="X-ray"/>
    <property type="resolution" value="3.05 A"/>
    <property type="chains" value="A=265-508"/>
</dbReference>
<dbReference type="PDB" id="7KCO">
    <property type="method" value="X-ray"/>
    <property type="resolution" value="1.86 A"/>
    <property type="chains" value="A/B=262-507"/>
</dbReference>
<dbReference type="PDB" id="7KQJ">
    <property type="method" value="X-ray"/>
    <property type="resolution" value="2.65 A"/>
    <property type="chains" value="A=265-508"/>
</dbReference>
<dbReference type="PDB" id="7KXD">
    <property type="method" value="X-ray"/>
    <property type="resolution" value="1.62 A"/>
    <property type="chains" value="A=265-508"/>
</dbReference>
<dbReference type="PDB" id="7KXE">
    <property type="method" value="X-ray"/>
    <property type="resolution" value="2.42 A"/>
    <property type="chains" value="A=265-508"/>
</dbReference>
<dbReference type="PDB" id="7KXF">
    <property type="method" value="X-ray"/>
    <property type="resolution" value="2.14 A"/>
    <property type="chains" value="A=265-508"/>
</dbReference>
<dbReference type="PDB" id="7LUK">
    <property type="method" value="X-ray"/>
    <property type="resolution" value="2.09 A"/>
    <property type="chains" value="A=265-508"/>
</dbReference>
<dbReference type="PDB" id="7NEC">
    <property type="method" value="X-ray"/>
    <property type="resolution" value="1.95 A"/>
    <property type="chains" value="A=265-507"/>
</dbReference>
<dbReference type="PDB" id="7NP5">
    <property type="method" value="X-ray"/>
    <property type="resolution" value="1.55 A"/>
    <property type="chains" value="A=265-507"/>
</dbReference>
<dbReference type="PDB" id="7NP6">
    <property type="method" value="X-ray"/>
    <property type="resolution" value="1.84 A"/>
    <property type="chains" value="A=265-507"/>
</dbReference>
<dbReference type="PDB" id="7NPC">
    <property type="method" value="X-ray"/>
    <property type="resolution" value="1.47 A"/>
    <property type="chains" value="A=268-507"/>
</dbReference>
<dbReference type="PDB" id="7OFI">
    <property type="method" value="X-ray"/>
    <property type="resolution" value="1.95 A"/>
    <property type="chains" value="A=265-507"/>
</dbReference>
<dbReference type="PDB" id="7OFK">
    <property type="method" value="X-ray"/>
    <property type="resolution" value="1.61 A"/>
    <property type="chains" value="A=265-507"/>
</dbReference>
<dbReference type="PDB" id="7QP4">
    <property type="method" value="X-ray"/>
    <property type="resolution" value="2.30 A"/>
    <property type="chains" value="A/B=264-518"/>
</dbReference>
<dbReference type="PDB" id="7W3P">
    <property type="method" value="X-ray"/>
    <property type="resolution" value="1.77 A"/>
    <property type="chains" value="A=262-507"/>
</dbReference>
<dbReference type="PDB" id="7W3Q">
    <property type="method" value="X-ray"/>
    <property type="resolution" value="2.00 A"/>
    <property type="chains" value="A=262-507"/>
</dbReference>
<dbReference type="PDB" id="7XQE">
    <property type="method" value="X-ray"/>
    <property type="resolution" value="2.57 A"/>
    <property type="chains" value="A/B=262-507"/>
</dbReference>
<dbReference type="PDB" id="8FAV">
    <property type="method" value="X-ray"/>
    <property type="resolution" value="1.85 A"/>
    <property type="chains" value="A/B=259-517"/>
</dbReference>
<dbReference type="PDB" id="8FB1">
    <property type="method" value="X-ray"/>
    <property type="resolution" value="2.18 A"/>
    <property type="chains" value="A/B=259-517"/>
</dbReference>
<dbReference type="PDB" id="8FB2">
    <property type="method" value="X-ray"/>
    <property type="resolution" value="2.30 A"/>
    <property type="chains" value="A/B=259-517"/>
</dbReference>
<dbReference type="PDB" id="8GXP">
    <property type="method" value="X-ray"/>
    <property type="resolution" value="2.45 A"/>
    <property type="chains" value="A=265-507"/>
</dbReference>
<dbReference type="PDB" id="8X7E">
    <property type="method" value="X-ray"/>
    <property type="resolution" value="2.30 A"/>
    <property type="chains" value="A/C/E/G=261-518"/>
</dbReference>
<dbReference type="PDB" id="8XU5">
    <property type="method" value="X-ray"/>
    <property type="resolution" value="3.50 A"/>
    <property type="chains" value="A/B=265-507"/>
</dbReference>
<dbReference type="PDBsum" id="3B0W"/>
<dbReference type="PDBsum" id="3KYT"/>
<dbReference type="PDBsum" id="3L0J"/>
<dbReference type="PDBsum" id="3L0L"/>
<dbReference type="PDBsum" id="4NB6"/>
<dbReference type="PDBsum" id="4NIE"/>
<dbReference type="PDBsum" id="4QM0"/>
<dbReference type="PDBsum" id="4S14"/>
<dbReference type="PDBsum" id="4WLB"/>
<dbReference type="PDBsum" id="4WPF"/>
<dbReference type="PDBsum" id="4WQP"/>
<dbReference type="PDBsum" id="4XT9"/>
<dbReference type="PDBsum" id="4YMQ"/>
<dbReference type="PDBsum" id="4YPQ"/>
<dbReference type="PDBsum" id="4ZJR"/>
<dbReference type="PDBsum" id="4ZJW"/>
<dbReference type="PDBsum" id="4ZOM"/>
<dbReference type="PDBsum" id="5APH"/>
<dbReference type="PDBsum" id="5APJ"/>
<dbReference type="PDBsum" id="5APK"/>
<dbReference type="PDBsum" id="5AYG"/>
<dbReference type="PDBsum" id="5C4O"/>
<dbReference type="PDBsum" id="5C4S"/>
<dbReference type="PDBsum" id="5C4T"/>
<dbReference type="PDBsum" id="5C4U"/>
<dbReference type="PDBsum" id="5EJV"/>
<dbReference type="PDBsum" id="5ETH"/>
<dbReference type="PDBsum" id="5G42"/>
<dbReference type="PDBsum" id="5G43"/>
<dbReference type="PDBsum" id="5G44"/>
<dbReference type="PDBsum" id="5G45"/>
<dbReference type="PDBsum" id="5G46"/>
<dbReference type="PDBsum" id="5IXK"/>
<dbReference type="PDBsum" id="5IZ0"/>
<dbReference type="PDBsum" id="5K38"/>
<dbReference type="PDBsum" id="5K3L"/>
<dbReference type="PDBsum" id="5K3M"/>
<dbReference type="PDBsum" id="5K3N"/>
<dbReference type="PDBsum" id="5K6E"/>
<dbReference type="PDBsum" id="5K74"/>
<dbReference type="PDBsum" id="5LWP"/>
<dbReference type="PDBsum" id="5M96"/>
<dbReference type="PDBsum" id="5NI5"/>
<dbReference type="PDBsum" id="5NI7"/>
<dbReference type="PDBsum" id="5NI8"/>
<dbReference type="PDBsum" id="5NIB"/>
<dbReference type="PDBsum" id="5NTI"/>
<dbReference type="PDBsum" id="5NTK"/>
<dbReference type="PDBsum" id="5NTN"/>
<dbReference type="PDBsum" id="5NTP"/>
<dbReference type="PDBsum" id="5NTQ"/>
<dbReference type="PDBsum" id="5NTW"/>
<dbReference type="PDBsum" id="5NU1"/>
<dbReference type="PDBsum" id="5UFO"/>
<dbReference type="PDBsum" id="5UFR"/>
<dbReference type="PDBsum" id="5UHI"/>
<dbReference type="PDBsum" id="5VB3"/>
<dbReference type="PDBsum" id="5VB5"/>
<dbReference type="PDBsum" id="5VB6"/>
<dbReference type="PDBsum" id="5VB7"/>
<dbReference type="PDBsum" id="5VQK"/>
<dbReference type="PDBsum" id="5VQL"/>
<dbReference type="PDBsum" id="5W4R"/>
<dbReference type="PDBsum" id="5W4V"/>
<dbReference type="PDBsum" id="5X8Q"/>
<dbReference type="PDBsum" id="5YP5"/>
<dbReference type="PDBsum" id="5YP6"/>
<dbReference type="PDBsum" id="5ZA1"/>
<dbReference type="PDBsum" id="6A22"/>
<dbReference type="PDBsum" id="6B30"/>
<dbReference type="PDBsum" id="6B31"/>
<dbReference type="PDBsum" id="6B33"/>
<dbReference type="PDBsum" id="6BN6"/>
<dbReference type="PDBsum" id="6BR2"/>
<dbReference type="PDBsum" id="6BR3"/>
<dbReference type="PDBsum" id="6CN5"/>
<dbReference type="PDBsum" id="6CN6"/>
<dbReference type="PDBsum" id="6CVH"/>
<dbReference type="PDBsum" id="6E3E"/>
<dbReference type="PDBsum" id="6E3G"/>
<dbReference type="PDBsum" id="6ESN"/>
<dbReference type="PDBsum" id="6FGQ"/>
<dbReference type="PDBsum" id="6FZU"/>
<dbReference type="PDBsum" id="6G05"/>
<dbReference type="PDBsum" id="6G07"/>
<dbReference type="PDBsum" id="6IVX"/>
<dbReference type="PDBsum" id="6J1L"/>
<dbReference type="PDBsum" id="6J3N"/>
<dbReference type="PDBsum" id="6LO9"/>
<dbReference type="PDBsum" id="6LOA"/>
<dbReference type="PDBsum" id="6LOB"/>
<dbReference type="PDBsum" id="6LOC"/>
<dbReference type="PDBsum" id="6NAD"/>
<dbReference type="PDBsum" id="6NWS"/>
<dbReference type="PDBsum" id="6NWT"/>
<dbReference type="PDBsum" id="6NWU"/>
<dbReference type="PDBsum" id="6O3Z"/>
<dbReference type="PDBsum" id="6O98"/>
<dbReference type="PDBsum" id="6P9F"/>
<dbReference type="PDBsum" id="6Q2W"/>
<dbReference type="PDBsum" id="6Q6M"/>
<dbReference type="PDBsum" id="6Q6O"/>
<dbReference type="PDBsum" id="6Q7A"/>
<dbReference type="PDBsum" id="6Q7H"/>
<dbReference type="PDBsum" id="6R7A"/>
<dbReference type="PDBsum" id="6R7J"/>
<dbReference type="PDBsum" id="6R7K"/>
<dbReference type="PDBsum" id="6SAL"/>
<dbReference type="PDBsum" id="6SLZ"/>
<dbReference type="PDBsum" id="6T4G"/>
<dbReference type="PDBsum" id="6T4I"/>
<dbReference type="PDBsum" id="6T4J"/>
<dbReference type="PDBsum" id="6T4K"/>
<dbReference type="PDBsum" id="6T4T"/>
<dbReference type="PDBsum" id="6T4U"/>
<dbReference type="PDBsum" id="6T4W"/>
<dbReference type="PDBsum" id="6T4X"/>
<dbReference type="PDBsum" id="6T4Y"/>
<dbReference type="PDBsum" id="6T50"/>
<dbReference type="PDBsum" id="6TLM"/>
<dbReference type="PDBsum" id="6TLQ"/>
<dbReference type="PDBsum" id="6TLT"/>
<dbReference type="PDBsum" id="6U25"/>
<dbReference type="PDBsum" id="6UCG"/>
<dbReference type="PDBsum" id="6VQF"/>
<dbReference type="PDBsum" id="6VSW"/>
<dbReference type="PDBsum" id="6W9H"/>
<dbReference type="PDBsum" id="6W9I"/>
<dbReference type="PDBsum" id="6XAE"/>
<dbReference type="PDBsum" id="6XFV"/>
<dbReference type="PDBsum" id="7E3M"/>
<dbReference type="PDBsum" id="7JH2"/>
<dbReference type="PDBsum" id="7JTM"/>
<dbReference type="PDBsum" id="7JTW"/>
<dbReference type="PDBsum" id="7JYM"/>
<dbReference type="PDBsum" id="7KCO"/>
<dbReference type="PDBsum" id="7KQJ"/>
<dbReference type="PDBsum" id="7KXD"/>
<dbReference type="PDBsum" id="7KXE"/>
<dbReference type="PDBsum" id="7KXF"/>
<dbReference type="PDBsum" id="7LUK"/>
<dbReference type="PDBsum" id="7NEC"/>
<dbReference type="PDBsum" id="7NP5"/>
<dbReference type="PDBsum" id="7NP6"/>
<dbReference type="PDBsum" id="7NPC"/>
<dbReference type="PDBsum" id="7OFI"/>
<dbReference type="PDBsum" id="7OFK"/>
<dbReference type="PDBsum" id="7QP4"/>
<dbReference type="PDBsum" id="7W3P"/>
<dbReference type="PDBsum" id="7W3Q"/>
<dbReference type="PDBsum" id="7XQE"/>
<dbReference type="PDBsum" id="8FAV"/>
<dbReference type="PDBsum" id="8FB1"/>
<dbReference type="PDBsum" id="8FB2"/>
<dbReference type="PDBsum" id="8GXP"/>
<dbReference type="PDBsum" id="8X7E"/>
<dbReference type="PDBsum" id="8XU5"/>
<dbReference type="SASBDB" id="P51449"/>
<dbReference type="SMR" id="P51449"/>
<dbReference type="BioGRID" id="112024">
    <property type="interactions" value="41"/>
</dbReference>
<dbReference type="DIP" id="DIP-60622N"/>
<dbReference type="FunCoup" id="P51449">
    <property type="interactions" value="1561"/>
</dbReference>
<dbReference type="IntAct" id="P51449">
    <property type="interactions" value="33"/>
</dbReference>
<dbReference type="MINT" id="P51449"/>
<dbReference type="STRING" id="9606.ENSP00000327025"/>
<dbReference type="BindingDB" id="P51449"/>
<dbReference type="ChEMBL" id="CHEMBL1741186"/>
<dbReference type="DrugBank" id="DB04705">
    <property type="generic name" value="25-Hydroxycholesterol"/>
</dbReference>
<dbReference type="DrugBank" id="DB16319">
    <property type="generic name" value="GSK-2981278"/>
</dbReference>
<dbReference type="DrugCentral" id="P51449"/>
<dbReference type="GuidetoPHARMACOLOGY" id="600"/>
<dbReference type="GlyGen" id="P51449">
    <property type="glycosylation" value="1 site"/>
</dbReference>
<dbReference type="iPTMnet" id="P51449"/>
<dbReference type="PhosphoSitePlus" id="P51449"/>
<dbReference type="BioMuta" id="RORC"/>
<dbReference type="DMDM" id="49066040"/>
<dbReference type="jPOST" id="P51449"/>
<dbReference type="MassIVE" id="P51449"/>
<dbReference type="PaxDb" id="9606-ENSP00000327025"/>
<dbReference type="PeptideAtlas" id="P51449"/>
<dbReference type="ProteomicsDB" id="56305">
    <molecule id="P51449-1"/>
</dbReference>
<dbReference type="ProteomicsDB" id="56306">
    <molecule id="P51449-2"/>
</dbReference>
<dbReference type="Antibodypedia" id="20336">
    <property type="antibodies" value="810 antibodies from 42 providers"/>
</dbReference>
<dbReference type="DNASU" id="6097"/>
<dbReference type="Ensembl" id="ENST00000318247.7">
    <molecule id="P51449-1"/>
    <property type="protein sequence ID" value="ENSP00000327025.6"/>
    <property type="gene ID" value="ENSG00000143365.20"/>
</dbReference>
<dbReference type="Ensembl" id="ENST00000356728.11">
    <molecule id="P51449-2"/>
    <property type="protein sequence ID" value="ENSP00000349164.6"/>
    <property type="gene ID" value="ENSG00000143365.20"/>
</dbReference>
<dbReference type="GeneID" id="6097"/>
<dbReference type="KEGG" id="hsa:6097"/>
<dbReference type="MANE-Select" id="ENST00000318247.7">
    <property type="protein sequence ID" value="ENSP00000327025.6"/>
    <property type="RefSeq nucleotide sequence ID" value="NM_005060.4"/>
    <property type="RefSeq protein sequence ID" value="NP_005051.2"/>
</dbReference>
<dbReference type="UCSC" id="uc001ezg.4">
    <molecule id="P51449-1"/>
    <property type="organism name" value="human"/>
</dbReference>
<dbReference type="AGR" id="HGNC:10260"/>
<dbReference type="CTD" id="6097"/>
<dbReference type="DisGeNET" id="6097"/>
<dbReference type="GeneCards" id="RORC"/>
<dbReference type="HGNC" id="HGNC:10260">
    <property type="gene designation" value="RORC"/>
</dbReference>
<dbReference type="HPA" id="ENSG00000143365">
    <property type="expression patterns" value="Tissue enhanced (liver, skeletal muscle)"/>
</dbReference>
<dbReference type="MalaCards" id="RORC"/>
<dbReference type="MIM" id="602943">
    <property type="type" value="gene"/>
</dbReference>
<dbReference type="MIM" id="616622">
    <property type="type" value="phenotype"/>
</dbReference>
<dbReference type="neXtProt" id="NX_P51449"/>
<dbReference type="OpenTargets" id="ENSG00000143365"/>
<dbReference type="Orphanet" id="477857">
    <property type="disease" value="Mendelian susceptibility to mycobacterial diseases due to complete RORgamma receptor deficiency"/>
</dbReference>
<dbReference type="PharmGKB" id="PA34632"/>
<dbReference type="VEuPathDB" id="HostDB:ENSG00000143365"/>
<dbReference type="eggNOG" id="KOG4216">
    <property type="taxonomic scope" value="Eukaryota"/>
</dbReference>
<dbReference type="GeneTree" id="ENSGT00940000161521"/>
<dbReference type="HOGENOM" id="CLU_007368_2_0_1"/>
<dbReference type="InParanoid" id="P51449"/>
<dbReference type="OMA" id="NVEHHEV"/>
<dbReference type="OrthoDB" id="5771769at2759"/>
<dbReference type="PAN-GO" id="P51449">
    <property type="GO annotations" value="5 GO annotations based on evolutionary models"/>
</dbReference>
<dbReference type="PhylomeDB" id="P51449"/>
<dbReference type="TreeFam" id="TF319910"/>
<dbReference type="PathwayCommons" id="P51449"/>
<dbReference type="Reactome" id="R-HSA-383280">
    <property type="pathway name" value="Nuclear Receptor transcription pathway"/>
</dbReference>
<dbReference type="Reactome" id="R-HSA-6785807">
    <property type="pathway name" value="Interleukin-4 and Interleukin-13 signaling"/>
</dbReference>
<dbReference type="Reactome" id="R-HSA-8949275">
    <molecule id="P51449-2"/>
    <property type="pathway name" value="RUNX3 Regulates Immune Response and Cell Migration"/>
</dbReference>
<dbReference type="SignaLink" id="P51449"/>
<dbReference type="SIGNOR" id="P51449"/>
<dbReference type="BioGRID-ORCS" id="6097">
    <property type="hits" value="13 hits in 1178 CRISPR screens"/>
</dbReference>
<dbReference type="ChiTaRS" id="RORC">
    <property type="organism name" value="human"/>
</dbReference>
<dbReference type="EvolutionaryTrace" id="P51449"/>
<dbReference type="GeneWiki" id="RAR-related_orphan_receptor_gamma"/>
<dbReference type="GenomeRNAi" id="6097"/>
<dbReference type="Pharos" id="P51449">
    <property type="development level" value="Tchem"/>
</dbReference>
<dbReference type="PRO" id="PR:P51449"/>
<dbReference type="Proteomes" id="UP000005640">
    <property type="component" value="Chromosome 1"/>
</dbReference>
<dbReference type="RNAct" id="P51449">
    <property type="molecule type" value="protein"/>
</dbReference>
<dbReference type="Bgee" id="ENSG00000143365">
    <property type="expression patterns" value="Expressed in gastrocnemius and 151 other cell types or tissues"/>
</dbReference>
<dbReference type="ExpressionAtlas" id="P51449">
    <property type="expression patterns" value="baseline and differential"/>
</dbReference>
<dbReference type="GO" id="GO:0000785">
    <property type="term" value="C:chromatin"/>
    <property type="evidence" value="ECO:0000247"/>
    <property type="project" value="NTNU_SB"/>
</dbReference>
<dbReference type="GO" id="GO:0016604">
    <property type="term" value="C:nuclear body"/>
    <property type="evidence" value="ECO:0000314"/>
    <property type="project" value="HPA"/>
</dbReference>
<dbReference type="GO" id="GO:0005654">
    <property type="term" value="C:nucleoplasm"/>
    <property type="evidence" value="ECO:0000304"/>
    <property type="project" value="Reactome"/>
</dbReference>
<dbReference type="GO" id="GO:0005634">
    <property type="term" value="C:nucleus"/>
    <property type="evidence" value="ECO:0000314"/>
    <property type="project" value="UniProtKB"/>
</dbReference>
<dbReference type="GO" id="GO:0003700">
    <property type="term" value="F:DNA-binding transcription factor activity"/>
    <property type="evidence" value="ECO:0000250"/>
    <property type="project" value="UniProtKB"/>
</dbReference>
<dbReference type="GO" id="GO:0000981">
    <property type="term" value="F:DNA-binding transcription factor activity, RNA polymerase II-specific"/>
    <property type="evidence" value="ECO:0000247"/>
    <property type="project" value="NTNU_SB"/>
</dbReference>
<dbReference type="GO" id="GO:0001227">
    <property type="term" value="F:DNA-binding transcription repressor activity, RNA polymerase II-specific"/>
    <property type="evidence" value="ECO:0000314"/>
    <property type="project" value="NTNU_SB"/>
</dbReference>
<dbReference type="GO" id="GO:0098531">
    <property type="term" value="F:ligand-modulated transcription factor activity"/>
    <property type="evidence" value="ECO:0000314"/>
    <property type="project" value="UniProtKB"/>
</dbReference>
<dbReference type="GO" id="GO:0004879">
    <property type="term" value="F:nuclear receptor activity"/>
    <property type="evidence" value="ECO:0000318"/>
    <property type="project" value="GO_Central"/>
</dbReference>
<dbReference type="GO" id="GO:0008142">
    <property type="term" value="F:oxysterol binding"/>
    <property type="evidence" value="ECO:0000314"/>
    <property type="project" value="UniProtKB"/>
</dbReference>
<dbReference type="GO" id="GO:0000978">
    <property type="term" value="F:RNA polymerase II cis-regulatory region sequence-specific DNA binding"/>
    <property type="evidence" value="ECO:0000314"/>
    <property type="project" value="NTNU_SB"/>
</dbReference>
<dbReference type="GO" id="GO:1990837">
    <property type="term" value="F:sequence-specific double-stranded DNA binding"/>
    <property type="evidence" value="ECO:0000314"/>
    <property type="project" value="ARUK-UCL"/>
</dbReference>
<dbReference type="GO" id="GO:0008270">
    <property type="term" value="F:zinc ion binding"/>
    <property type="evidence" value="ECO:0007669"/>
    <property type="project" value="UniProtKB-KW"/>
</dbReference>
<dbReference type="GO" id="GO:0060612">
    <property type="term" value="P:adipose tissue development"/>
    <property type="evidence" value="ECO:0000250"/>
    <property type="project" value="UniProtKB"/>
</dbReference>
<dbReference type="GO" id="GO:0036315">
    <property type="term" value="P:cellular response to sterol"/>
    <property type="evidence" value="ECO:0000314"/>
    <property type="project" value="UniProtKB"/>
</dbReference>
<dbReference type="GO" id="GO:0032922">
    <property type="term" value="P:circadian regulation of gene expression"/>
    <property type="evidence" value="ECO:0000250"/>
    <property type="project" value="UniProtKB"/>
</dbReference>
<dbReference type="GO" id="GO:0048535">
    <property type="term" value="P:lymph node development"/>
    <property type="evidence" value="ECO:0000250"/>
    <property type="project" value="UniProtKB"/>
</dbReference>
<dbReference type="GO" id="GO:0070244">
    <property type="term" value="P:negative regulation of thymocyte apoptotic process"/>
    <property type="evidence" value="ECO:0000250"/>
    <property type="project" value="UniProtKB"/>
</dbReference>
<dbReference type="GO" id="GO:0000122">
    <property type="term" value="P:negative regulation of transcription by RNA polymerase II"/>
    <property type="evidence" value="ECO:0000314"/>
    <property type="project" value="NTNU_SB"/>
</dbReference>
<dbReference type="GO" id="GO:0048541">
    <property type="term" value="P:Peyer's patch development"/>
    <property type="evidence" value="ECO:0000250"/>
    <property type="project" value="UniProtKB"/>
</dbReference>
<dbReference type="GO" id="GO:0042753">
    <property type="term" value="P:positive regulation of circadian rhythm"/>
    <property type="evidence" value="ECO:0000250"/>
    <property type="project" value="UniProtKB"/>
</dbReference>
<dbReference type="GO" id="GO:0045893">
    <property type="term" value="P:positive regulation of DNA-templated transcription"/>
    <property type="evidence" value="ECO:0000250"/>
    <property type="project" value="UniProtKB"/>
</dbReference>
<dbReference type="GO" id="GO:0045598">
    <property type="term" value="P:regulation of fat cell differentiation"/>
    <property type="evidence" value="ECO:0000250"/>
    <property type="project" value="UniProtKB"/>
</dbReference>
<dbReference type="GO" id="GO:0010906">
    <property type="term" value="P:regulation of glucose metabolic process"/>
    <property type="evidence" value="ECO:0000250"/>
    <property type="project" value="UniProtKB"/>
</dbReference>
<dbReference type="GO" id="GO:0019218">
    <property type="term" value="P:regulation of steroid metabolic process"/>
    <property type="evidence" value="ECO:0000250"/>
    <property type="project" value="UniProtKB"/>
</dbReference>
<dbReference type="GO" id="GO:0006357">
    <property type="term" value="P:regulation of transcription by RNA polymerase II"/>
    <property type="evidence" value="ECO:0000318"/>
    <property type="project" value="GO_Central"/>
</dbReference>
<dbReference type="GO" id="GO:0072539">
    <property type="term" value="P:T-helper 17 cell differentiation"/>
    <property type="evidence" value="ECO:0000250"/>
    <property type="project" value="UniProtKB"/>
</dbReference>
<dbReference type="GO" id="GO:0042093">
    <property type="term" value="P:T-helper cell differentiation"/>
    <property type="evidence" value="ECO:0000250"/>
    <property type="project" value="UniProtKB"/>
</dbReference>
<dbReference type="GO" id="GO:0006805">
    <property type="term" value="P:xenobiotic metabolic process"/>
    <property type="evidence" value="ECO:0000250"/>
    <property type="project" value="UniProtKB"/>
</dbReference>
<dbReference type="CDD" id="cd06968">
    <property type="entry name" value="NR_DBD_ROR"/>
    <property type="match status" value="1"/>
</dbReference>
<dbReference type="CDD" id="cd06939">
    <property type="entry name" value="NR_LBD_ROR_like"/>
    <property type="match status" value="1"/>
</dbReference>
<dbReference type="DisProt" id="DP01647"/>
<dbReference type="FunFam" id="1.10.565.10:FF:000005">
    <property type="entry name" value="Nuclear orphan receptor ROR-beta"/>
    <property type="match status" value="1"/>
</dbReference>
<dbReference type="FunFam" id="3.30.50.10:FF:000003">
    <property type="entry name" value="Nuclear orphan receptor ROR-beta"/>
    <property type="match status" value="1"/>
</dbReference>
<dbReference type="Gene3D" id="3.30.50.10">
    <property type="entry name" value="Erythroid Transcription Factor GATA-1, subunit A"/>
    <property type="match status" value="1"/>
</dbReference>
<dbReference type="Gene3D" id="1.10.565.10">
    <property type="entry name" value="Retinoid X Receptor"/>
    <property type="match status" value="1"/>
</dbReference>
<dbReference type="IDEAL" id="IID00305"/>
<dbReference type="InterPro" id="IPR035500">
    <property type="entry name" value="NHR-like_dom_sf"/>
</dbReference>
<dbReference type="InterPro" id="IPR044101">
    <property type="entry name" value="NR_DBD_ROR"/>
</dbReference>
<dbReference type="InterPro" id="IPR000536">
    <property type="entry name" value="Nucl_hrmn_rcpt_lig-bd"/>
</dbReference>
<dbReference type="InterPro" id="IPR001723">
    <property type="entry name" value="Nuclear_hrmn_rcpt"/>
</dbReference>
<dbReference type="InterPro" id="IPR003079">
    <property type="entry name" value="ROR_rcpt"/>
</dbReference>
<dbReference type="InterPro" id="IPR001628">
    <property type="entry name" value="Znf_hrmn_rcpt"/>
</dbReference>
<dbReference type="InterPro" id="IPR013088">
    <property type="entry name" value="Znf_NHR/GATA"/>
</dbReference>
<dbReference type="PANTHER" id="PTHR45805">
    <property type="entry name" value="NUCLEAR HORMONE RECEPTOR HR3-RELATED"/>
    <property type="match status" value="1"/>
</dbReference>
<dbReference type="PANTHER" id="PTHR45805:SF1">
    <property type="entry name" value="NUCLEAR RECEPTOR ROR-GAMMA"/>
    <property type="match status" value="1"/>
</dbReference>
<dbReference type="Pfam" id="PF00104">
    <property type="entry name" value="Hormone_recep"/>
    <property type="match status" value="1"/>
</dbReference>
<dbReference type="Pfam" id="PF00105">
    <property type="entry name" value="zf-C4"/>
    <property type="match status" value="1"/>
</dbReference>
<dbReference type="PRINTS" id="PR01293">
    <property type="entry name" value="RORNUCRECPTR"/>
</dbReference>
<dbReference type="PRINTS" id="PR00398">
    <property type="entry name" value="STRDHORMONER"/>
</dbReference>
<dbReference type="PRINTS" id="PR00047">
    <property type="entry name" value="STROIDFINGER"/>
</dbReference>
<dbReference type="SMART" id="SM00430">
    <property type="entry name" value="HOLI"/>
    <property type="match status" value="1"/>
</dbReference>
<dbReference type="SMART" id="SM00399">
    <property type="entry name" value="ZnF_C4"/>
    <property type="match status" value="1"/>
</dbReference>
<dbReference type="SUPFAM" id="SSF57716">
    <property type="entry name" value="Glucocorticoid receptor-like (DNA-binding domain)"/>
    <property type="match status" value="1"/>
</dbReference>
<dbReference type="SUPFAM" id="SSF48508">
    <property type="entry name" value="Nuclear receptor ligand-binding domain"/>
    <property type="match status" value="1"/>
</dbReference>
<dbReference type="PROSITE" id="PS51843">
    <property type="entry name" value="NR_LBD"/>
    <property type="match status" value="1"/>
</dbReference>
<dbReference type="PROSITE" id="PS00031">
    <property type="entry name" value="NUCLEAR_REC_DBD_1"/>
    <property type="match status" value="1"/>
</dbReference>
<dbReference type="PROSITE" id="PS51030">
    <property type="entry name" value="NUCLEAR_REC_DBD_2"/>
    <property type="match status" value="1"/>
</dbReference>
<gene>
    <name type="primary">RORC</name>
    <name type="synonym">NR1F3</name>
    <name type="synonym">RORG</name>
    <name type="synonym">RZRG</name>
</gene>
<evidence type="ECO:0000250" key="1">
    <source>
        <dbReference type="UniProtKB" id="P51450"/>
    </source>
</evidence>
<evidence type="ECO:0000255" key="2"/>
<evidence type="ECO:0000255" key="3">
    <source>
        <dbReference type="PROSITE-ProRule" id="PRU00407"/>
    </source>
</evidence>
<evidence type="ECO:0000255" key="4">
    <source>
        <dbReference type="PROSITE-ProRule" id="PRU01189"/>
    </source>
</evidence>
<evidence type="ECO:0000256" key="5">
    <source>
        <dbReference type="SAM" id="MobiDB-lite"/>
    </source>
</evidence>
<evidence type="ECO:0000269" key="6">
    <source>
    </source>
</evidence>
<evidence type="ECO:0000269" key="7">
    <source>
    </source>
</evidence>
<evidence type="ECO:0000269" key="8">
    <source>
    </source>
</evidence>
<evidence type="ECO:0000269" key="9">
    <source>
    </source>
</evidence>
<evidence type="ECO:0000269" key="10">
    <source>
    </source>
</evidence>
<evidence type="ECO:0000269" key="11">
    <source>
    </source>
</evidence>
<evidence type="ECO:0000269" key="12">
    <source>
    </source>
</evidence>
<evidence type="ECO:0000269" key="13">
    <source>
    </source>
</evidence>
<evidence type="ECO:0000269" key="14">
    <source>
    </source>
</evidence>
<evidence type="ECO:0000269" key="15">
    <source>
    </source>
</evidence>
<evidence type="ECO:0000303" key="16">
    <source>
    </source>
</evidence>
<evidence type="ECO:0000305" key="17"/>
<evidence type="ECO:0007829" key="18">
    <source>
        <dbReference type="PDB" id="5APH"/>
    </source>
</evidence>
<evidence type="ECO:0007829" key="19">
    <source>
        <dbReference type="PDB" id="5K3N"/>
    </source>
</evidence>
<evidence type="ECO:0007829" key="20">
    <source>
        <dbReference type="PDB" id="7NP5"/>
    </source>
</evidence>
<evidence type="ECO:0007829" key="21">
    <source>
        <dbReference type="PDB" id="7NPC"/>
    </source>
</evidence>
<comment type="function">
    <text evidence="1 7 8 9 14 15">Nuclear receptor that binds DNA as a monomer to ROR response elements (RORE) containing a single core motif half-site 5'-AGGTCA-3' preceded by a short A-T-rich sequence. Key regulator of cellular differentiation, immunity, peripheral circadian rhythm as well as lipid, steroid, xenobiotics and glucose metabolism (PubMed:19381306, PubMed:19965867, PubMed:20203100, PubMed:22789990, PubMed:26160376). Considered to have intrinsic transcriptional activity, have some natural ligands like oxysterols that act as agonists (25-hydroxycholesterol) or inverse agonists (7-oxygenated sterols), enhancing or repressing the transcriptional activity, respectively (PubMed:19965867, PubMed:22789990). Recruits distinct combinations of cofactors to target gene regulatory regions to modulate their transcriptional expression, depending on the tissue, time and promoter contexts. Regulates the circadian expression of clock genes such as CRY1, BMAL1 and NR1D1 in peripheral tissues and in a tissue-selective manner. Competes with NR1D1 for binding to their shared DNA response element on some clock genes such as BMAL1, CRY1 and NR1D1 itself, resulting in NR1D1-mediated repression or RORC-mediated activation of the expression, leading to the circadian pattern of clock genes expression. Therefore influences the period length and stability of the clock. Involved in the regulation of the rhythmic expression of genes involved in glucose and lipid metabolism, including PLIN2 and AVPR1A (PubMed:19965867). Negative regulator of adipocyte differentiation through the regulation of early phase genes expression, such as MMP3. Controls adipogenesis as well as adipocyte size and modulates insulin sensitivity in obesity. In liver, has specific and redundant functions with RORA as positive or negative modulator of expression of genes encoding phase I and Phase II proteins involved in the metabolism of lipids, steroids and xenobiotics, such as SULT1E1. Also plays a role in the regulation of hepatocyte glucose metabolism through the regulation of G6PC1 and PCK1 (PubMed:19965867). Regulates the rhythmic expression of PROX1 and promotes its nuclear localization (PubMed:19381306, PubMed:19965867, PubMed:20203100, PubMed:22789990, PubMed:26160376). Plays an indispensable role in the induction of IFN-gamma dependent anti-mycobacterial systemic immunity (PubMed:26160376).</text>
</comment>
<comment type="function">
    <molecule>Isoform 2</molecule>
    <text evidence="11">Essential for thymopoiesis and the development of several secondary lymphoid tissues, including lymph nodes and Peyer's patches. Required for the generation of LTi (lymphoid tissue inducer) cells. Regulates thymocyte survival through DNA-binding on ROREs of target gene promoter regions and recruitment of coactivaros via the AF-2. Also plays a key role, downstream of IL6 and TGFB and synergistically with RORA, for lineage specification of uncommitted CD4(+) T-helper (T(H)) cells into T(H)17 cells, antagonizing the T(H)1 program. Probably regulates IL17 and IL17F expression on T(H) by binding to the essential enhancer conserved non-coding sequence 2 (CNS2) in the IL17-IL17F locus. May also play a role in the pre-TCR activation cascade leading to the maturation of alpha/beta T-cells and may participate in the regulation of DNA accessibility in the TCR-J(alpha) locus.</text>
</comment>
<comment type="subunit">
    <text evidence="1 6 10 13">Interacts (via AF-2 motif) with the coactivator NCOA2 (via LXXLL motif) (PubMed:20211758). Interacts with the corepressor NCOR1 (By similarity). Interacts with CRY1 (PubMed:22170608). Interacts (via AF-2 motif) with the coactivators NCOA1 and PPARGC1A (via LXXLL motif) (By similarity). Interacts (via AF-2 motif) with PROX1 (By similarity). Interacts with FOXP3 (PubMed:18368049). Interacts with NR0B2 (By similarity).</text>
</comment>
<comment type="interaction">
    <interactant intactId="EBI-3908771">
        <id>P51449</id>
    </interactant>
    <interactant intactId="EBI-455189">
        <id>Q15788</id>
        <label>NCOA1</label>
    </interactant>
    <organismsDiffer>false</organismsDiffer>
    <experiments>2</experiments>
</comment>
<comment type="interaction">
    <interactant intactId="EBI-3908771">
        <id>P51449</id>
    </interactant>
    <interactant intactId="EBI-357745">
        <id>P62195</id>
        <label>PSMC5</label>
    </interactant>
    <organismsDiffer>false</organismsDiffer>
    <experiments>3</experiments>
</comment>
<comment type="interaction">
    <interactant intactId="EBI-3908771">
        <id>P51449</id>
    </interactant>
    <interactant intactId="EBI-644534">
        <id>Q9WTL8</id>
        <label>Bmal1</label>
    </interactant>
    <organismsDiffer>true</organismsDiffer>
    <experiments>2</experiments>
</comment>
<comment type="interaction">
    <interactant intactId="EBI-3908771">
        <id>P51449</id>
    </interactant>
    <interactant intactId="EBI-79859">
        <id>O08785</id>
        <label>Clock</label>
    </interactant>
    <organismsDiffer>true</organismsDiffer>
    <experiments>2</experiments>
</comment>
<comment type="subcellular location">
    <subcellularLocation>
        <location evidence="15">Nucleus</location>
    </subcellularLocation>
</comment>
<comment type="alternative products">
    <event type="alternative promoter"/>
    <isoform>
        <id>P51449-1</id>
        <name>1</name>
        <sequence type="displayed"/>
    </isoform>
    <isoform>
        <id>P51449-2</id>
        <name>2</name>
        <name>RORgT</name>
        <sequence type="described" ref="VSP_010632 VSP_010633"/>
    </isoform>
</comment>
<comment type="tissue specificity">
    <text>Isoform 1 is widely expressed in many tissues, including liver and adipose, and highly expressed in skeletal muscle. Isoform 2 is primarily expressed in immature thymocytes.</text>
</comment>
<comment type="induction">
    <text evidence="12">Up-regulated in the state of obesity.</text>
</comment>
<comment type="domain">
    <text evidence="1">The AF-2 (activation function-2) motif is required for recruiting coregulators containing LXXLL motifs such as NCOA1 and NCOA2.</text>
</comment>
<comment type="disease" evidence="15">
    <disease id="DI-04562">
        <name>Immunodeficiency 42</name>
        <acronym>IMD42</acronym>
        <description>An autosomal recessive primary immunodeficiency characterized by increased susceptibility to concomitant candidiasis and mycobacteriosis. Candidiasis is characterized by persistent and/or recurrent infections of the skin, nails and mucous membranes caused by organisms of the genus Candida. Mycobacteriosis is characterized by infections caused by moderately virulent mycobacterial species, such as Bacillus Calmette-Guerin (BCG) vaccine, environmental non-tuberculous mycobacteria, and by the more virulent Mycobacterium tuberculosis. IMD42 patients vaccinated with BCG are particularly at risk for developing disseminated mycobacterial infections.</description>
        <dbReference type="MIM" id="616622"/>
    </disease>
    <text>The disease is caused by variants affecting the gene represented in this entry.</text>
</comment>
<comment type="similarity">
    <text evidence="17">Belongs to the nuclear hormone receptor family. NR1 subfamily.</text>
</comment>
<comment type="sequence caution" evidence="17">
    <conflict type="frameshift">
        <sequence resource="EMBL-CDS" id="AAA64751"/>
    </conflict>
</comment>
<proteinExistence type="evidence at protein level"/>
<name>RORG_HUMAN</name>
<accession>P51449</accession>
<accession>Q5SZR9</accession>
<accession>Q8N5V7</accession>
<accession>Q8NCY8</accession>
<sequence length="518" mass="58195">MDRAPQRQHRASRELLAAKKTHTSQIEVIPCKICGDKSSGIHYGVITCEGCKGFFRRSQRCNAAYSCTRQQNCPIDRTSRNRCQHCRLQKCLALGMSRDAVKFGRMSKKQRDSLHAEVQKQLQQRQQQQQEPVVKTPPAGAQGADTLTYTLGLPDGQLPLGSSPDLPEASACPPGLLKASGSGPSYSNNLAKAGLNGASCHLEYSPERGKAEGRESFYSTGSQLTPDRCGLRFEEHRHPGLGELGQGPDSYGSPSFRSTPEAPYASLTEIEHLVQSVCKSYRETCQLRLEDLLRQRSNIFSREEVTGYQRKSMWEMWERCAHHLTEAIQYVVEFAKRLSGFMELCQNDQIVLLKAGAMEVVLVRMCRAYNADNRTVFFEGKYGGMELFRALGCSELISSIFDFSHSLSALHFSEDEIALYTALVLINAHRPGLQEKRKVEQLQYNLELAFHHHLCKTHRQSILAKLPPKGKLRSLCSQHVERLQIFQHLHPIVVQAAFPPLYKELFSTETESPVGLSK</sequence>
<reference key="1">
    <citation type="journal article" date="1994" name="Biochem. Biophys. Res. Commun.">
        <title>ROR gamma: the third member of ROR/RZR orphan receptor subfamily that is highly expressed in skeletal muscle.</title>
        <authorList>
            <person name="Hirose T."/>
            <person name="Smith R.J."/>
            <person name="Jetten A.M."/>
        </authorList>
    </citation>
    <scope>NUCLEOTIDE SEQUENCE [MRNA] (ISOFORM 1)</scope>
    <source>
        <tissue>Skeletal muscle</tissue>
    </source>
</reference>
<reference key="2">
    <citation type="journal article" date="2007" name="BMC Genomics">
        <title>The full-ORF clone resource of the German cDNA consortium.</title>
        <authorList>
            <person name="Bechtel S."/>
            <person name="Rosenfelder H."/>
            <person name="Duda A."/>
            <person name="Schmidt C.P."/>
            <person name="Ernst U."/>
            <person name="Wellenreuther R."/>
            <person name="Mehrle A."/>
            <person name="Schuster C."/>
            <person name="Bahr A."/>
            <person name="Bloecker H."/>
            <person name="Heubner D."/>
            <person name="Hoerlein A."/>
            <person name="Michel G."/>
            <person name="Wedler H."/>
            <person name="Koehrer K."/>
            <person name="Ottenwaelder B."/>
            <person name="Poustka A."/>
            <person name="Wiemann S."/>
            <person name="Schupp I."/>
        </authorList>
    </citation>
    <scope>NUCLEOTIDE SEQUENCE [LARGE SCALE MRNA] (ISOFORM 2)</scope>
    <source>
        <tissue>Lymph node</tissue>
    </source>
</reference>
<reference key="3">
    <citation type="journal article" date="2006" name="Nature">
        <title>The DNA sequence and biological annotation of human chromosome 1.</title>
        <authorList>
            <person name="Gregory S.G."/>
            <person name="Barlow K.F."/>
            <person name="McLay K.E."/>
            <person name="Kaul R."/>
            <person name="Swarbreck D."/>
            <person name="Dunham A."/>
            <person name="Scott C.E."/>
            <person name="Howe K.L."/>
            <person name="Woodfine K."/>
            <person name="Spencer C.C.A."/>
            <person name="Jones M.C."/>
            <person name="Gillson C."/>
            <person name="Searle S."/>
            <person name="Zhou Y."/>
            <person name="Kokocinski F."/>
            <person name="McDonald L."/>
            <person name="Evans R."/>
            <person name="Phillips K."/>
            <person name="Atkinson A."/>
            <person name="Cooper R."/>
            <person name="Jones C."/>
            <person name="Hall R.E."/>
            <person name="Andrews T.D."/>
            <person name="Lloyd C."/>
            <person name="Ainscough R."/>
            <person name="Almeida J.P."/>
            <person name="Ambrose K.D."/>
            <person name="Anderson F."/>
            <person name="Andrew R.W."/>
            <person name="Ashwell R.I.S."/>
            <person name="Aubin K."/>
            <person name="Babbage A.K."/>
            <person name="Bagguley C.L."/>
            <person name="Bailey J."/>
            <person name="Beasley H."/>
            <person name="Bethel G."/>
            <person name="Bird C.P."/>
            <person name="Bray-Allen S."/>
            <person name="Brown J.Y."/>
            <person name="Brown A.J."/>
            <person name="Buckley D."/>
            <person name="Burton J."/>
            <person name="Bye J."/>
            <person name="Carder C."/>
            <person name="Chapman J.C."/>
            <person name="Clark S.Y."/>
            <person name="Clarke G."/>
            <person name="Clee C."/>
            <person name="Cobley V."/>
            <person name="Collier R.E."/>
            <person name="Corby N."/>
            <person name="Coville G.J."/>
            <person name="Davies J."/>
            <person name="Deadman R."/>
            <person name="Dunn M."/>
            <person name="Earthrowl M."/>
            <person name="Ellington A.G."/>
            <person name="Errington H."/>
            <person name="Frankish A."/>
            <person name="Frankland J."/>
            <person name="French L."/>
            <person name="Garner P."/>
            <person name="Garnett J."/>
            <person name="Gay L."/>
            <person name="Ghori M.R.J."/>
            <person name="Gibson R."/>
            <person name="Gilby L.M."/>
            <person name="Gillett W."/>
            <person name="Glithero R.J."/>
            <person name="Grafham D.V."/>
            <person name="Griffiths C."/>
            <person name="Griffiths-Jones S."/>
            <person name="Grocock R."/>
            <person name="Hammond S."/>
            <person name="Harrison E.S.I."/>
            <person name="Hart E."/>
            <person name="Haugen E."/>
            <person name="Heath P.D."/>
            <person name="Holmes S."/>
            <person name="Holt K."/>
            <person name="Howden P.J."/>
            <person name="Hunt A.R."/>
            <person name="Hunt S.E."/>
            <person name="Hunter G."/>
            <person name="Isherwood J."/>
            <person name="James R."/>
            <person name="Johnson C."/>
            <person name="Johnson D."/>
            <person name="Joy A."/>
            <person name="Kay M."/>
            <person name="Kershaw J.K."/>
            <person name="Kibukawa M."/>
            <person name="Kimberley A.M."/>
            <person name="King A."/>
            <person name="Knights A.J."/>
            <person name="Lad H."/>
            <person name="Laird G."/>
            <person name="Lawlor S."/>
            <person name="Leongamornlert D.A."/>
            <person name="Lloyd D.M."/>
            <person name="Loveland J."/>
            <person name="Lovell J."/>
            <person name="Lush M.J."/>
            <person name="Lyne R."/>
            <person name="Martin S."/>
            <person name="Mashreghi-Mohammadi M."/>
            <person name="Matthews L."/>
            <person name="Matthews N.S.W."/>
            <person name="McLaren S."/>
            <person name="Milne S."/>
            <person name="Mistry S."/>
            <person name="Moore M.J.F."/>
            <person name="Nickerson T."/>
            <person name="O'Dell C.N."/>
            <person name="Oliver K."/>
            <person name="Palmeiri A."/>
            <person name="Palmer S.A."/>
            <person name="Parker A."/>
            <person name="Patel D."/>
            <person name="Pearce A.V."/>
            <person name="Peck A.I."/>
            <person name="Pelan S."/>
            <person name="Phelps K."/>
            <person name="Phillimore B.J."/>
            <person name="Plumb R."/>
            <person name="Rajan J."/>
            <person name="Raymond C."/>
            <person name="Rouse G."/>
            <person name="Saenphimmachak C."/>
            <person name="Sehra H.K."/>
            <person name="Sheridan E."/>
            <person name="Shownkeen R."/>
            <person name="Sims S."/>
            <person name="Skuce C.D."/>
            <person name="Smith M."/>
            <person name="Steward C."/>
            <person name="Subramanian S."/>
            <person name="Sycamore N."/>
            <person name="Tracey A."/>
            <person name="Tromans A."/>
            <person name="Van Helmond Z."/>
            <person name="Wall M."/>
            <person name="Wallis J.M."/>
            <person name="White S."/>
            <person name="Whitehead S.L."/>
            <person name="Wilkinson J.E."/>
            <person name="Willey D.L."/>
            <person name="Williams H."/>
            <person name="Wilming L."/>
            <person name="Wray P.W."/>
            <person name="Wu Z."/>
            <person name="Coulson A."/>
            <person name="Vaudin M."/>
            <person name="Sulston J.E."/>
            <person name="Durbin R.M."/>
            <person name="Hubbard T."/>
            <person name="Wooster R."/>
            <person name="Dunham I."/>
            <person name="Carter N.P."/>
            <person name="McVean G."/>
            <person name="Ross M.T."/>
            <person name="Harrow J."/>
            <person name="Olson M.V."/>
            <person name="Beck S."/>
            <person name="Rogers J."/>
            <person name="Bentley D.R."/>
        </authorList>
    </citation>
    <scope>NUCLEOTIDE SEQUENCE [LARGE SCALE GENOMIC DNA]</scope>
</reference>
<reference key="4">
    <citation type="journal article" date="2004" name="Genome Res.">
        <title>The status, quality, and expansion of the NIH full-length cDNA project: the Mammalian Gene Collection (MGC).</title>
        <authorList>
            <consortium name="The MGC Project Team"/>
        </authorList>
    </citation>
    <scope>NUCLEOTIDE SEQUENCE [LARGE SCALE MRNA] (ISOFORM 1)</scope>
    <source>
        <tissue>Colon</tissue>
        <tissue>Kidney</tissue>
    </source>
</reference>
<reference key="5">
    <citation type="journal article" date="2008" name="Nature">
        <title>TGF-beta-induced Foxp3 inhibits T(H)17 cell differentiation by antagonizing RORgammat function.</title>
        <authorList>
            <person name="Zhou L."/>
            <person name="Lopes J.E."/>
            <person name="Chong M.M."/>
            <person name="Ivanov I.I."/>
            <person name="Min R."/>
            <person name="Victora G.D."/>
            <person name="Shen Y."/>
            <person name="Du J."/>
            <person name="Rubtsov Y.P."/>
            <person name="Rudensky A.Y."/>
            <person name="Ziegler S.F."/>
            <person name="Littman D.R."/>
        </authorList>
    </citation>
    <scope>INTERACTION WITH FOXP3</scope>
</reference>
<reference key="6">
    <citation type="journal article" date="2009" name="Nucl. Recept. Signal.">
        <title>Retinoid-related orphan receptors (RORs): critical roles in development, immunity, circadian rhythm, and cellular metabolism.</title>
        <authorList>
            <person name="Jetten A.M."/>
        </authorList>
    </citation>
    <scope>REVIEW ON FUNCTION</scope>
</reference>
<reference key="7">
    <citation type="journal article" date="2010" name="Biochim. Biophys. Acta">
        <title>A second class of nuclear receptors for oxysterols: Regulation of RORalpha and RORgamma activity by 24S-hydroxycholesterol (cerebrosterol).</title>
        <authorList>
            <person name="Wang Y."/>
            <person name="Kumar N."/>
            <person name="Crumbley C."/>
            <person name="Griffin P.R."/>
            <person name="Burris T.P."/>
        </authorList>
    </citation>
    <scope>ACTIVITY REGULATION</scope>
    <scope>INTERACTION WITH NCOA2</scope>
</reference>
<reference key="8">
    <citation type="journal article" date="2010" name="J. Biol. Chem.">
        <title>Modulation of retinoic acid receptor-related orphan receptor alpha and gamma activity by 7-oxygenated sterol ligands.</title>
        <authorList>
            <person name="Wang Y."/>
            <person name="Kumar N."/>
            <person name="Solt L.A."/>
            <person name="Richardson T.I."/>
            <person name="Helvering L.M."/>
            <person name="Crumbley C."/>
            <person name="Garcia-Ordonez R.D."/>
            <person name="Stayrook K.R."/>
            <person name="Zhang X."/>
            <person name="Novick S."/>
            <person name="Chalmers M.J."/>
            <person name="Griffin P.R."/>
            <person name="Burris T.P."/>
        </authorList>
    </citation>
    <scope>FUNCTION IN GLUCOSE METABOLISM REGULATION</scope>
    <scope>IDENTIFICATION OF LIGANDS</scope>
</reference>
<reference key="9">
    <citation type="journal article" date="2011" name="EMBO Mol. Med.">
        <title>Adipogenesis and insulin sensitivity in obesity are regulated by retinoid-related orphan receptor gamma.</title>
        <authorList>
            <person name="Meissburger B."/>
            <person name="Ukropec J."/>
            <person name="Roeder E."/>
            <person name="Beaton N."/>
            <person name="Geiger M."/>
            <person name="Teupser D."/>
            <person name="Civan B."/>
            <person name="Langhans W."/>
            <person name="Nawroth P.P."/>
            <person name="Gasperikova D."/>
            <person name="Rudofsky G."/>
            <person name="Wolfrum C."/>
        </authorList>
    </citation>
    <scope>INDUCTION BY OBESITY</scope>
</reference>
<reference key="10">
    <citation type="journal article" date="2011" name="Nature">
        <title>Suppression of TH17 differentiation and autoimmunity by a synthetic ROR ligand.</title>
        <authorList>
            <person name="Solt L.A."/>
            <person name="Kumar N."/>
            <person name="Nuhant P."/>
            <person name="Wang Y."/>
            <person name="Lauer J.L."/>
            <person name="Liu J."/>
            <person name="Istrate M.A."/>
            <person name="Kamenecka T.M."/>
            <person name="Roush W.R."/>
            <person name="Vidovic D."/>
            <person name="Schuerer S.C."/>
            <person name="Xu J."/>
            <person name="Wagoner G."/>
            <person name="Drew P.D."/>
            <person name="Griffin P.R."/>
            <person name="Burris T.P."/>
        </authorList>
    </citation>
    <scope>FUNCTION IN T(H)17 CELLS DIFFERENTIATION</scope>
    <scope>IDENTIFICATION OF LIGANDS</scope>
</reference>
<reference key="11">
    <citation type="journal article" date="2011" name="Nature">
        <title>Cryptochromes mediate rhythmic repression of the glucocorticoid receptor.</title>
        <authorList>
            <person name="Lamia K.A."/>
            <person name="Papp S.J."/>
            <person name="Yu R.T."/>
            <person name="Barish G.D."/>
            <person name="Uhlenhaut N.H."/>
            <person name="Jonker J.W."/>
            <person name="Downes M."/>
            <person name="Evans R.M."/>
        </authorList>
    </citation>
    <scope>INTERACTION WITH CRY1</scope>
</reference>
<reference key="12">
    <citation type="journal article" date="2012" name="Trends Endocrinol. Metab.">
        <title>Action of RORs and their ligands in (patho)physiology.</title>
        <authorList>
            <person name="Solt L.A."/>
            <person name="Burris T.P."/>
        </authorList>
    </citation>
    <scope>REVIEW ON FUNCTION AND LIGANDS</scope>
</reference>
<reference key="13">
    <citation type="journal article" date="2015" name="Science">
        <title>Impairment of immunity to Candida and Mycobacterium in humans with bi-allelic RORC mutations.</title>
        <authorList>
            <person name="Okada S."/>
            <person name="Markle J.G."/>
            <person name="Deenick E.K."/>
            <person name="Mele F."/>
            <person name="Averbuch D."/>
            <person name="Lagos M."/>
            <person name="Alzahrani M."/>
            <person name="Al-Muhsen S."/>
            <person name="Halwani R."/>
            <person name="Ma C.S."/>
            <person name="Wong N."/>
            <person name="Soudais C."/>
            <person name="Henderson L.A."/>
            <person name="Marzouqa H."/>
            <person name="Shamma J."/>
            <person name="Gonzalez M."/>
            <person name="Martinez-Barricarte R."/>
            <person name="Okada C."/>
            <person name="Avery D.T."/>
            <person name="Latorre D."/>
            <person name="Deswarte C."/>
            <person name="Jabot-Hanin F."/>
            <person name="Torrado E."/>
            <person name="Fountain J."/>
            <person name="Belkadi A."/>
            <person name="Itan Y."/>
            <person name="Boisson B."/>
            <person name="Migaud M."/>
            <person name="Arlehamn C.S."/>
            <person name="Sette A."/>
            <person name="Breton S."/>
            <person name="McCluskey J."/>
            <person name="Rossjohn J."/>
            <person name="de Villartay J.P."/>
            <person name="Moshous D."/>
            <person name="Hambleton S."/>
            <person name="Latour S."/>
            <person name="Arkwright P.D."/>
            <person name="Picard C."/>
            <person name="Lantz O."/>
            <person name="Engelhard D."/>
            <person name="Kobayashi M."/>
            <person name="Abel L."/>
            <person name="Cooper A.M."/>
            <person name="Notarangelo L.D."/>
            <person name="Boisson-Dupuis S."/>
            <person name="Puel A."/>
            <person name="Sallusto F."/>
            <person name="Bustamante J."/>
            <person name="Tangye S.G."/>
            <person name="Casanova J.L."/>
        </authorList>
    </citation>
    <scope>FUNCTION</scope>
    <scope>SUBCELLULAR LOCATION</scope>
    <scope>INVOLVEMENT IN IMD42</scope>
    <scope>VARIANT IMD42 LEU-38</scope>
    <scope>CHARACTERIZATION OF VARIANT IMD42 LEU-38</scope>
</reference>
<reference key="14">
    <citation type="journal article" date="2010" name="Mol. Endocrinol.">
        <title>Structural basis for hydroxycholesterols as natural ligands of orphan nuclear receptor RORgamma.</title>
        <authorList>
            <person name="Jin L."/>
            <person name="Martynowski D."/>
            <person name="Zheng S."/>
            <person name="Wada T."/>
            <person name="Xie W."/>
            <person name="Li Y."/>
        </authorList>
    </citation>
    <scope>X-RAY CRYSTALLOGRAPHY (1.74 ANGSTROMS) OF 260-507 IN COMPLEX WITH HYDROXYCHOLESTEROLS</scope>
    <scope>FUNCTION TRANSCRIPTION ACTIVATOR</scope>
    <scope>MUTAGENESIS OF ALA-327; PHE-378 AND ILE-397</scope>
</reference>
<protein>
    <recommendedName>
        <fullName>Nuclear receptor ROR-gamma</fullName>
    </recommendedName>
    <alternativeName>
        <fullName>Nuclear receptor RZR-gamma</fullName>
    </alternativeName>
    <alternativeName>
        <fullName>Nuclear receptor subfamily 1 group F member 3</fullName>
    </alternativeName>
    <alternativeName>
        <fullName>RAR-related orphan receptor C</fullName>
    </alternativeName>
    <alternativeName>
        <fullName>Retinoid-related orphan receptor-gamma</fullName>
    </alternativeName>
</protein>
<feature type="chain" id="PRO_0000053517" description="Nuclear receptor ROR-gamma">
    <location>
        <begin position="1"/>
        <end position="518"/>
    </location>
</feature>
<feature type="domain" description="NR LBD" evidence="4">
    <location>
        <begin position="269"/>
        <end position="508"/>
    </location>
</feature>
<feature type="DNA-binding region" description="Nuclear receptor" evidence="3">
    <location>
        <begin position="31"/>
        <end position="96"/>
    </location>
</feature>
<feature type="zinc finger region" description="NR C4-type" evidence="3">
    <location>
        <begin position="31"/>
        <end position="51"/>
    </location>
</feature>
<feature type="zinc finger region" description="NR C4-type" evidence="3">
    <location>
        <begin position="67"/>
        <end position="91"/>
    </location>
</feature>
<feature type="region of interest" description="Modulating" evidence="2">
    <location>
        <begin position="1"/>
        <end position="30"/>
    </location>
</feature>
<feature type="region of interest" description="Disordered" evidence="5">
    <location>
        <begin position="105"/>
        <end position="183"/>
    </location>
</feature>
<feature type="region of interest" description="Disordered" evidence="5">
    <location>
        <begin position="238"/>
        <end position="258"/>
    </location>
</feature>
<feature type="short sequence motif" description="AF-2">
    <location>
        <begin position="501"/>
        <end position="506"/>
    </location>
</feature>
<feature type="compositionally biased region" description="Basic and acidic residues" evidence="5">
    <location>
        <begin position="109"/>
        <end position="118"/>
    </location>
</feature>
<feature type="compositionally biased region" description="Low complexity" evidence="5">
    <location>
        <begin position="119"/>
        <end position="130"/>
    </location>
</feature>
<feature type="splice variant" id="VSP_010632" description="In isoform 2." evidence="16">
    <location>
        <begin position="1"/>
        <end position="21"/>
    </location>
</feature>
<feature type="splice variant" id="VSP_010633" description="In isoform 2." evidence="16">
    <original>HTS</original>
    <variation>MRT</variation>
    <location>
        <begin position="22"/>
        <end position="24"/>
    </location>
</feature>
<feature type="sequence variant" id="VAR_073725" description="In IMD42; does not affect nuclear localization; loss of transcription regulatory region sequence-specific DNA binding; loss of transcriptional activity; dbSNP:rs774357869." evidence="15">
    <original>S</original>
    <variation>L</variation>
    <location>
        <position position="38"/>
    </location>
</feature>
<feature type="mutagenesis site" description="Completely abolishes transcriptional activity." evidence="9">
    <original>A</original>
    <variation>F</variation>
    <location>
        <position position="327"/>
    </location>
</feature>
<feature type="mutagenesis site" description="Completely abolishes transcriptional activity." evidence="9">
    <original>F</original>
    <variation>Q</variation>
    <location>
        <position position="378"/>
    </location>
</feature>
<feature type="mutagenesis site" description="Nearly abolishes transcriptional activity." evidence="9">
    <original>I</original>
    <variation>N</variation>
    <location>
        <position position="397"/>
    </location>
</feature>
<feature type="helix" evidence="21">
    <location>
        <begin position="269"/>
        <end position="284"/>
    </location>
</feature>
<feature type="strand" evidence="20">
    <location>
        <begin position="285"/>
        <end position="287"/>
    </location>
</feature>
<feature type="helix" evidence="21">
    <location>
        <begin position="289"/>
        <end position="294"/>
    </location>
</feature>
<feature type="helix" evidence="21">
    <location>
        <begin position="295"/>
        <end position="297"/>
    </location>
</feature>
<feature type="helix" evidence="21">
    <location>
        <begin position="302"/>
        <end position="310"/>
    </location>
</feature>
<feature type="helix" evidence="21">
    <location>
        <begin position="313"/>
        <end position="336"/>
    </location>
</feature>
<feature type="helix" evidence="21">
    <location>
        <begin position="341"/>
        <end position="343"/>
    </location>
</feature>
<feature type="helix" evidence="21">
    <location>
        <begin position="346"/>
        <end position="364"/>
    </location>
</feature>
<feature type="helix" evidence="21">
    <location>
        <begin position="365"/>
        <end position="368"/>
    </location>
</feature>
<feature type="turn" evidence="21">
    <location>
        <begin position="371"/>
        <end position="374"/>
    </location>
</feature>
<feature type="strand" evidence="21">
    <location>
        <begin position="375"/>
        <end position="378"/>
    </location>
</feature>
<feature type="strand" evidence="21">
    <location>
        <begin position="381"/>
        <end position="383"/>
    </location>
</feature>
<feature type="helix" evidence="21">
    <location>
        <begin position="385"/>
        <end position="391"/>
    </location>
</feature>
<feature type="helix" evidence="21">
    <location>
        <begin position="394"/>
        <end position="408"/>
    </location>
</feature>
<feature type="turn" evidence="21">
    <location>
        <begin position="409"/>
        <end position="411"/>
    </location>
</feature>
<feature type="helix" evidence="21">
    <location>
        <begin position="414"/>
        <end position="425"/>
    </location>
</feature>
<feature type="strand" evidence="19">
    <location>
        <begin position="430"/>
        <end position="432"/>
    </location>
</feature>
<feature type="helix" evidence="21">
    <location>
        <begin position="436"/>
        <end position="456"/>
    </location>
</feature>
<feature type="helix" evidence="21">
    <location>
        <begin position="460"/>
        <end position="465"/>
    </location>
</feature>
<feature type="helix" evidence="21">
    <location>
        <begin position="471"/>
        <end position="489"/>
    </location>
</feature>
<feature type="helix" evidence="18">
    <location>
        <begin position="491"/>
        <end position="497"/>
    </location>
</feature>
<feature type="helix" evidence="21">
    <location>
        <begin position="499"/>
        <end position="505"/>
    </location>
</feature>